<feature type="initiator methionine" description="Removed" evidence="2">
    <location>
        <position position="1"/>
    </location>
</feature>
<feature type="chain" id="PRO_0000273977" description="U1 small nuclear ribonucleoprotein A">
    <location>
        <begin position="2"/>
        <end position="282"/>
    </location>
</feature>
<feature type="domain" description="RRM 1" evidence="3">
    <location>
        <begin position="10"/>
        <end position="89"/>
    </location>
</feature>
<feature type="domain" description="RRM 2" evidence="3">
    <location>
        <begin position="208"/>
        <end position="282"/>
    </location>
</feature>
<feature type="region of interest" description="Disordered" evidence="4">
    <location>
        <begin position="101"/>
        <end position="141"/>
    </location>
</feature>
<feature type="compositionally biased region" description="Low complexity" evidence="4">
    <location>
        <begin position="119"/>
        <end position="141"/>
    </location>
</feature>
<feature type="modified residue" description="N-acetylalanine" evidence="2">
    <location>
        <position position="2"/>
    </location>
</feature>
<feature type="modified residue" description="N6-acetyllysine" evidence="2">
    <location>
        <position position="60"/>
    </location>
</feature>
<feature type="modified residue" description="Omega-N-methylarginine" evidence="2">
    <location>
        <position position="152"/>
    </location>
</feature>
<evidence type="ECO:0000250" key="1"/>
<evidence type="ECO:0000250" key="2">
    <source>
        <dbReference type="UniProtKB" id="P09012"/>
    </source>
</evidence>
<evidence type="ECO:0000255" key="3">
    <source>
        <dbReference type="PROSITE-ProRule" id="PRU00176"/>
    </source>
</evidence>
<evidence type="ECO:0000256" key="4">
    <source>
        <dbReference type="SAM" id="MobiDB-lite"/>
    </source>
</evidence>
<evidence type="ECO:0000305" key="5"/>
<reference key="1">
    <citation type="submission" date="2006-01" db="EMBL/GenBank/DDBJ databases">
        <authorList>
            <consortium name="NIH - Mammalian Gene Collection (MGC) project"/>
        </authorList>
    </citation>
    <scope>NUCLEOTIDE SEQUENCE [LARGE SCALE MRNA]</scope>
    <source>
        <strain>Hereford</strain>
        <tissue>Testis</tissue>
    </source>
</reference>
<protein>
    <recommendedName>
        <fullName>U1 small nuclear ribonucleoprotein A</fullName>
        <shortName>U1 snRNP A</shortName>
        <shortName>U1-A</shortName>
        <shortName>U1A</shortName>
    </recommendedName>
</protein>
<accession>Q2KIR1</accession>
<comment type="function">
    <text evidence="1">Component of the spliceosomal U1 snRNP, which is essential for recognition of the pre-mRNA 5' splice-site and the subsequent assembly of the spliceosome. U1 snRNP is the first snRNP to interact with pre-mRNA. This interaction is required for the subsequent binding of U2 snRNP and the U4/U6/U5 tri-snRNP. SNRPA binds stem loop II of U1 snRNA. In a snRNP-free form (SF-A) may be involved in coupled pre-mRNA splicing and polyadenylation process. May bind preferentially to the 5'-UGCAC-3' motif on RNAs (By similarity).</text>
</comment>
<comment type="subunit">
    <text evidence="1">U1 snRNP is composed of the 7 core Sm proteins SNRPB, SNRPD1, SNRPD2, SNRPD3, SNRPE, SNRPF and SNRPG that assemble in a heptameric protein ring on the Sm site of the small nuclear RNA to form the core snRNP, and at least three U1 snRNP-specific proteins SNRNP70/U1-70K, SNRPA/U1-A and SNRPC/U1-C. Interacts with SFPQ; component of a snRNP-free complex with SFPQ (By similarity).</text>
</comment>
<comment type="subcellular location">
    <subcellularLocation>
        <location evidence="1">Nucleus</location>
    </subcellularLocation>
</comment>
<comment type="similarity">
    <text evidence="5">Belongs to the RRM U1 A/B'' family.</text>
</comment>
<keyword id="KW-0007">Acetylation</keyword>
<keyword id="KW-0488">Methylation</keyword>
<keyword id="KW-0507">mRNA processing</keyword>
<keyword id="KW-0508">mRNA splicing</keyword>
<keyword id="KW-0539">Nucleus</keyword>
<keyword id="KW-1185">Reference proteome</keyword>
<keyword id="KW-0677">Repeat</keyword>
<keyword id="KW-0687">Ribonucleoprotein</keyword>
<keyword id="KW-0694">RNA-binding</keyword>
<keyword id="KW-0747">Spliceosome</keyword>
<name>SNRPA_BOVIN</name>
<proteinExistence type="evidence at transcript level"/>
<gene>
    <name type="primary">SNRPA</name>
</gene>
<organism>
    <name type="scientific">Bos taurus</name>
    <name type="common">Bovine</name>
    <dbReference type="NCBI Taxonomy" id="9913"/>
    <lineage>
        <taxon>Eukaryota</taxon>
        <taxon>Metazoa</taxon>
        <taxon>Chordata</taxon>
        <taxon>Craniata</taxon>
        <taxon>Vertebrata</taxon>
        <taxon>Euteleostomi</taxon>
        <taxon>Mammalia</taxon>
        <taxon>Eutheria</taxon>
        <taxon>Laurasiatheria</taxon>
        <taxon>Artiodactyla</taxon>
        <taxon>Ruminantia</taxon>
        <taxon>Pecora</taxon>
        <taxon>Bovidae</taxon>
        <taxon>Bovinae</taxon>
        <taxon>Bos</taxon>
    </lineage>
</organism>
<sequence>MAVPETRPNHTIYINNLNEKIKKDELKKSLYAIFSQFGQILDILVSRSLKMRGQAFVIFKEVSSATNALRSMQGFPFYDKPMRIQYAKTDSDIIAKMKGTFVERDRKREKRKPKSQETPAAKKAVQGGAAAPVVGTVQGPVPGMPPMTQAPRIMHHMPGQPPYMPPPGMIPPPGLAPGQLPPGAMPPQQLMPGQMPPAQPLSENPPNHILFLTNLPEETNELMLSMLFNQFPGFKEVRLVPGRHDIAFVEFDNEVQAGAARDALQGFKITQNNAMKISFAKK</sequence>
<dbReference type="EMBL" id="BC112544">
    <property type="protein sequence ID" value="AAI12545.1"/>
    <property type="molecule type" value="mRNA"/>
</dbReference>
<dbReference type="RefSeq" id="NP_001039504.1">
    <property type="nucleotide sequence ID" value="NM_001046039.2"/>
</dbReference>
<dbReference type="RefSeq" id="XP_024833860.1">
    <property type="nucleotide sequence ID" value="XM_024978092.2"/>
</dbReference>
<dbReference type="SMR" id="Q2KIR1"/>
<dbReference type="FunCoup" id="Q2KIR1">
    <property type="interactions" value="4166"/>
</dbReference>
<dbReference type="STRING" id="9913.ENSBTAP00000011963"/>
<dbReference type="PaxDb" id="9913-ENSBTAP00000011963"/>
<dbReference type="PeptideAtlas" id="Q2KIR1"/>
<dbReference type="Ensembl" id="ENSBTAT00000011963.5">
    <property type="protein sequence ID" value="ENSBTAP00000011963.4"/>
    <property type="gene ID" value="ENSBTAG00000009077.5"/>
</dbReference>
<dbReference type="GeneID" id="509802"/>
<dbReference type="KEGG" id="bta:509802"/>
<dbReference type="CTD" id="6626"/>
<dbReference type="VEuPathDB" id="HostDB:ENSBTAG00000009077"/>
<dbReference type="VGNC" id="VGNC:35074">
    <property type="gene designation" value="SNRPA"/>
</dbReference>
<dbReference type="eggNOG" id="KOG4206">
    <property type="taxonomic scope" value="Eukaryota"/>
</dbReference>
<dbReference type="GeneTree" id="ENSGT00390000007046"/>
<dbReference type="HOGENOM" id="CLU_041869_1_3_1"/>
<dbReference type="InParanoid" id="Q2KIR1"/>
<dbReference type="OMA" id="VRMIPTK"/>
<dbReference type="OrthoDB" id="277802at2759"/>
<dbReference type="TreeFam" id="TF313834"/>
<dbReference type="Reactome" id="R-BTA-72163">
    <property type="pathway name" value="mRNA Splicing - Major Pathway"/>
</dbReference>
<dbReference type="Proteomes" id="UP000009136">
    <property type="component" value="Chromosome 18"/>
</dbReference>
<dbReference type="Bgee" id="ENSBTAG00000009077">
    <property type="expression patterns" value="Expressed in retropharyngeal lymph node and 107 other cell types or tissues"/>
</dbReference>
<dbReference type="GO" id="GO:0005654">
    <property type="term" value="C:nucleoplasm"/>
    <property type="evidence" value="ECO:0007669"/>
    <property type="project" value="Ensembl"/>
</dbReference>
<dbReference type="GO" id="GO:0005681">
    <property type="term" value="C:spliceosomal complex"/>
    <property type="evidence" value="ECO:0007669"/>
    <property type="project" value="UniProtKB-KW"/>
</dbReference>
<dbReference type="GO" id="GO:0005685">
    <property type="term" value="C:U1 snRNP"/>
    <property type="evidence" value="ECO:0000250"/>
    <property type="project" value="UniProtKB"/>
</dbReference>
<dbReference type="GO" id="GO:0046540">
    <property type="term" value="C:U4/U6 x U5 tri-snRNP complex"/>
    <property type="evidence" value="ECO:0007669"/>
    <property type="project" value="Ensembl"/>
</dbReference>
<dbReference type="GO" id="GO:0042802">
    <property type="term" value="F:identical protein binding"/>
    <property type="evidence" value="ECO:0007669"/>
    <property type="project" value="Ensembl"/>
</dbReference>
<dbReference type="GO" id="GO:0003723">
    <property type="term" value="F:RNA binding"/>
    <property type="evidence" value="ECO:0000250"/>
    <property type="project" value="UniProtKB"/>
</dbReference>
<dbReference type="GO" id="GO:0030619">
    <property type="term" value="F:U1 snRNA binding"/>
    <property type="evidence" value="ECO:0000250"/>
    <property type="project" value="UniProtKB"/>
</dbReference>
<dbReference type="GO" id="GO:0000398">
    <property type="term" value="P:mRNA splicing, via spliceosome"/>
    <property type="evidence" value="ECO:0000318"/>
    <property type="project" value="GO_Central"/>
</dbReference>
<dbReference type="CDD" id="cd12477">
    <property type="entry name" value="RRM1_U1A"/>
    <property type="match status" value="1"/>
</dbReference>
<dbReference type="CDD" id="cd12480">
    <property type="entry name" value="RRM2_U1A"/>
    <property type="match status" value="1"/>
</dbReference>
<dbReference type="FunFam" id="3.30.70.330:FF:000039">
    <property type="entry name" value="U1 small nuclear ribonucleoprotein A"/>
    <property type="match status" value="1"/>
</dbReference>
<dbReference type="FunFam" id="3.30.70.330:FF:000029">
    <property type="entry name" value="U2 small nuclear ribonucleoprotein B"/>
    <property type="match status" value="1"/>
</dbReference>
<dbReference type="Gene3D" id="3.30.70.330">
    <property type="match status" value="2"/>
</dbReference>
<dbReference type="InterPro" id="IPR012677">
    <property type="entry name" value="Nucleotide-bd_a/b_plait_sf"/>
</dbReference>
<dbReference type="InterPro" id="IPR035979">
    <property type="entry name" value="RBD_domain_sf"/>
</dbReference>
<dbReference type="InterPro" id="IPR000504">
    <property type="entry name" value="RRM_dom"/>
</dbReference>
<dbReference type="InterPro" id="IPR034407">
    <property type="entry name" value="U1A_RRM1"/>
</dbReference>
<dbReference type="InterPro" id="IPR034409">
    <property type="entry name" value="U1A_RRM2"/>
</dbReference>
<dbReference type="PANTHER" id="PTHR10501">
    <property type="entry name" value="U1 SMALL NUCLEAR RIBONUCLEOPROTEIN A/U2 SMALL NUCLEAR RIBONUCLEOPROTEIN B"/>
    <property type="match status" value="1"/>
</dbReference>
<dbReference type="Pfam" id="PF00076">
    <property type="entry name" value="RRM_1"/>
    <property type="match status" value="2"/>
</dbReference>
<dbReference type="SMART" id="SM00360">
    <property type="entry name" value="RRM"/>
    <property type="match status" value="2"/>
</dbReference>
<dbReference type="SUPFAM" id="SSF54928">
    <property type="entry name" value="RNA-binding domain, RBD"/>
    <property type="match status" value="1"/>
</dbReference>
<dbReference type="PROSITE" id="PS50102">
    <property type="entry name" value="RRM"/>
    <property type="match status" value="2"/>
</dbReference>